<reference key="1">
    <citation type="journal article" date="1990" name="Biol. Chem. Hoppe-Seyler">
        <title>Carnivora: the primary structure of hemoglobin from the Masked palm civet (Paguma larvata, Viverridae).</title>
        <authorList>
            <person name="He C."/>
            <person name="Braunitzer G."/>
            <person name="Goeltenboth R."/>
        </authorList>
    </citation>
    <scope>PROTEIN SEQUENCE</scope>
</reference>
<organism>
    <name type="scientific">Paguma larvata</name>
    <name type="common">Masked palm civet</name>
    <dbReference type="NCBI Taxonomy" id="9675"/>
    <lineage>
        <taxon>Eukaryota</taxon>
        <taxon>Metazoa</taxon>
        <taxon>Chordata</taxon>
        <taxon>Craniata</taxon>
        <taxon>Vertebrata</taxon>
        <taxon>Euteleostomi</taxon>
        <taxon>Mammalia</taxon>
        <taxon>Eutheria</taxon>
        <taxon>Laurasiatheria</taxon>
        <taxon>Carnivora</taxon>
        <taxon>Feliformia</taxon>
        <taxon>Viverridae</taxon>
        <taxon>Paradoxurinae</taxon>
        <taxon>Paguma</taxon>
    </lineage>
</organism>
<name>HBB_PAGLA</name>
<protein>
    <recommendedName>
        <fullName>Hemoglobin subunit beta</fullName>
    </recommendedName>
    <alternativeName>
        <fullName>Beta-globin</fullName>
    </alternativeName>
    <alternativeName>
        <fullName>Hemoglobin beta chain</fullName>
    </alternativeName>
</protein>
<accession>P19646</accession>
<feature type="chain" id="PRO_0000053050" description="Hemoglobin subunit beta">
    <location>
        <begin position="1"/>
        <end position="146"/>
    </location>
</feature>
<feature type="domain" description="Globin" evidence="2">
    <location>
        <begin position="2"/>
        <end position="146"/>
    </location>
</feature>
<feature type="binding site" description="distal binding residue">
    <location>
        <position position="63"/>
    </location>
    <ligand>
        <name>heme b</name>
        <dbReference type="ChEBI" id="CHEBI:60344"/>
    </ligand>
    <ligandPart>
        <name>Fe</name>
        <dbReference type="ChEBI" id="CHEBI:18248"/>
    </ligandPart>
</feature>
<feature type="binding site" description="proximal binding residue">
    <location>
        <position position="92"/>
    </location>
    <ligand>
        <name>heme b</name>
        <dbReference type="ChEBI" id="CHEBI:60344"/>
    </ligand>
    <ligandPart>
        <name>Fe</name>
        <dbReference type="ChEBI" id="CHEBI:18248"/>
    </ligandPart>
</feature>
<feature type="modified residue" description="Phosphoserine" evidence="1">
    <location>
        <position position="44"/>
    </location>
</feature>
<feature type="modified residue" description="N6-acetyllysine" evidence="1">
    <location>
        <position position="59"/>
    </location>
</feature>
<feature type="modified residue" description="N6-acetyllysine" evidence="1">
    <location>
        <position position="82"/>
    </location>
</feature>
<feature type="modified residue" description="S-nitrosocysteine" evidence="1">
    <location>
        <position position="93"/>
    </location>
</feature>
<sequence length="146" mass="16011">GFLTAEEKGLVNGLWGKVNVDEVGGEALGRLLVVYPWTQRFFQSFGDLSSADAIMHNSKVKAHGKKVLNSFSDGLKHVDDLKGTFAKLSELHCDKLHVDPENFKLLGNVLVCVLAHHFGKEFTPQVQAAYQKVVAGVASALAHRYH</sequence>
<evidence type="ECO:0000250" key="1">
    <source>
        <dbReference type="UniProtKB" id="P68871"/>
    </source>
</evidence>
<evidence type="ECO:0000255" key="2">
    <source>
        <dbReference type="PROSITE-ProRule" id="PRU00238"/>
    </source>
</evidence>
<keyword id="KW-0007">Acetylation</keyword>
<keyword id="KW-0903">Direct protein sequencing</keyword>
<keyword id="KW-0349">Heme</keyword>
<keyword id="KW-0408">Iron</keyword>
<keyword id="KW-0479">Metal-binding</keyword>
<keyword id="KW-0561">Oxygen transport</keyword>
<keyword id="KW-0597">Phosphoprotein</keyword>
<keyword id="KW-0702">S-nitrosylation</keyword>
<keyword id="KW-0813">Transport</keyword>
<gene>
    <name type="primary">HBB</name>
</gene>
<dbReference type="PIR" id="S13281">
    <property type="entry name" value="S13281"/>
</dbReference>
<dbReference type="SMR" id="P19646"/>
<dbReference type="GO" id="GO:0072562">
    <property type="term" value="C:blood microparticle"/>
    <property type="evidence" value="ECO:0007669"/>
    <property type="project" value="TreeGrafter"/>
</dbReference>
<dbReference type="GO" id="GO:0031838">
    <property type="term" value="C:haptoglobin-hemoglobin complex"/>
    <property type="evidence" value="ECO:0007669"/>
    <property type="project" value="TreeGrafter"/>
</dbReference>
<dbReference type="GO" id="GO:0005833">
    <property type="term" value="C:hemoglobin complex"/>
    <property type="evidence" value="ECO:0007669"/>
    <property type="project" value="InterPro"/>
</dbReference>
<dbReference type="GO" id="GO:0031720">
    <property type="term" value="F:haptoglobin binding"/>
    <property type="evidence" value="ECO:0007669"/>
    <property type="project" value="TreeGrafter"/>
</dbReference>
<dbReference type="GO" id="GO:0020037">
    <property type="term" value="F:heme binding"/>
    <property type="evidence" value="ECO:0007669"/>
    <property type="project" value="InterPro"/>
</dbReference>
<dbReference type="GO" id="GO:0031721">
    <property type="term" value="F:hemoglobin alpha binding"/>
    <property type="evidence" value="ECO:0007669"/>
    <property type="project" value="TreeGrafter"/>
</dbReference>
<dbReference type="GO" id="GO:0046872">
    <property type="term" value="F:metal ion binding"/>
    <property type="evidence" value="ECO:0007669"/>
    <property type="project" value="UniProtKB-KW"/>
</dbReference>
<dbReference type="GO" id="GO:0043177">
    <property type="term" value="F:organic acid binding"/>
    <property type="evidence" value="ECO:0007669"/>
    <property type="project" value="TreeGrafter"/>
</dbReference>
<dbReference type="GO" id="GO:0019825">
    <property type="term" value="F:oxygen binding"/>
    <property type="evidence" value="ECO:0007669"/>
    <property type="project" value="InterPro"/>
</dbReference>
<dbReference type="GO" id="GO:0005344">
    <property type="term" value="F:oxygen carrier activity"/>
    <property type="evidence" value="ECO:0007669"/>
    <property type="project" value="UniProtKB-KW"/>
</dbReference>
<dbReference type="GO" id="GO:0004601">
    <property type="term" value="F:peroxidase activity"/>
    <property type="evidence" value="ECO:0007669"/>
    <property type="project" value="TreeGrafter"/>
</dbReference>
<dbReference type="GO" id="GO:0042744">
    <property type="term" value="P:hydrogen peroxide catabolic process"/>
    <property type="evidence" value="ECO:0007669"/>
    <property type="project" value="TreeGrafter"/>
</dbReference>
<dbReference type="CDD" id="cd08925">
    <property type="entry name" value="Hb-beta-like"/>
    <property type="match status" value="1"/>
</dbReference>
<dbReference type="FunFam" id="1.10.490.10:FF:000001">
    <property type="entry name" value="Hemoglobin subunit beta"/>
    <property type="match status" value="1"/>
</dbReference>
<dbReference type="Gene3D" id="1.10.490.10">
    <property type="entry name" value="Globins"/>
    <property type="match status" value="1"/>
</dbReference>
<dbReference type="InterPro" id="IPR000971">
    <property type="entry name" value="Globin"/>
</dbReference>
<dbReference type="InterPro" id="IPR009050">
    <property type="entry name" value="Globin-like_sf"/>
</dbReference>
<dbReference type="InterPro" id="IPR012292">
    <property type="entry name" value="Globin/Proto"/>
</dbReference>
<dbReference type="InterPro" id="IPR002337">
    <property type="entry name" value="Hemoglobin_b"/>
</dbReference>
<dbReference type="InterPro" id="IPR050056">
    <property type="entry name" value="Hemoglobin_oxygen_transport"/>
</dbReference>
<dbReference type="PANTHER" id="PTHR11442">
    <property type="entry name" value="HEMOGLOBIN FAMILY MEMBER"/>
    <property type="match status" value="1"/>
</dbReference>
<dbReference type="PANTHER" id="PTHR11442:SF42">
    <property type="entry name" value="HEMOGLOBIN SUBUNIT BETA"/>
    <property type="match status" value="1"/>
</dbReference>
<dbReference type="Pfam" id="PF00042">
    <property type="entry name" value="Globin"/>
    <property type="match status" value="1"/>
</dbReference>
<dbReference type="PRINTS" id="PR00814">
    <property type="entry name" value="BETAHAEM"/>
</dbReference>
<dbReference type="SUPFAM" id="SSF46458">
    <property type="entry name" value="Globin-like"/>
    <property type="match status" value="1"/>
</dbReference>
<dbReference type="PROSITE" id="PS01033">
    <property type="entry name" value="GLOBIN"/>
    <property type="match status" value="1"/>
</dbReference>
<comment type="function">
    <text>Involved in oxygen transport from the lung to the various peripheral tissues.</text>
</comment>
<comment type="subunit">
    <text>Heterotetramer of two alpha chains and two beta chains.</text>
</comment>
<comment type="tissue specificity">
    <text>Red blood cells.</text>
</comment>
<comment type="similarity">
    <text evidence="2">Belongs to the globin family.</text>
</comment>
<proteinExistence type="evidence at protein level"/>